<organism>
    <name type="scientific">Humulus lupulus</name>
    <name type="common">European hop</name>
    <dbReference type="NCBI Taxonomy" id="3486"/>
    <lineage>
        <taxon>Eukaryota</taxon>
        <taxon>Viridiplantae</taxon>
        <taxon>Streptophyta</taxon>
        <taxon>Embryophyta</taxon>
        <taxon>Tracheophyta</taxon>
        <taxon>Spermatophyta</taxon>
        <taxon>Magnoliopsida</taxon>
        <taxon>eudicotyledons</taxon>
        <taxon>Gunneridae</taxon>
        <taxon>Pentapetalae</taxon>
        <taxon>rosids</taxon>
        <taxon>fabids</taxon>
        <taxon>Rosales</taxon>
        <taxon>Cannabaceae</taxon>
        <taxon>Humulus</taxon>
    </lineage>
</organism>
<gene>
    <name evidence="5" type="primary">CCL1</name>
</gene>
<dbReference type="EC" id="6.2.1.12" evidence="3"/>
<dbReference type="EMBL" id="JQ740203">
    <property type="protein sequence ID" value="AGA17918.1"/>
    <property type="molecule type" value="mRNA"/>
</dbReference>
<dbReference type="SMR" id="M4ISH0"/>
<dbReference type="GO" id="GO:0005737">
    <property type="term" value="C:cytoplasm"/>
    <property type="evidence" value="ECO:0000314"/>
    <property type="project" value="UniProtKB"/>
</dbReference>
<dbReference type="GO" id="GO:0005829">
    <property type="term" value="C:cytosol"/>
    <property type="evidence" value="ECO:0000250"/>
    <property type="project" value="UniProtKB"/>
</dbReference>
<dbReference type="GO" id="GO:0016207">
    <property type="term" value="F:4-coumarate-CoA ligase activity"/>
    <property type="evidence" value="ECO:0000314"/>
    <property type="project" value="UniProtKB"/>
</dbReference>
<dbReference type="GO" id="GO:0005524">
    <property type="term" value="F:ATP binding"/>
    <property type="evidence" value="ECO:0007669"/>
    <property type="project" value="UniProtKB-KW"/>
</dbReference>
<dbReference type="GO" id="GO:0016405">
    <property type="term" value="F:CoA-ligase activity"/>
    <property type="evidence" value="ECO:0000314"/>
    <property type="project" value="UniProtKB"/>
</dbReference>
<dbReference type="CDD" id="cd05904">
    <property type="entry name" value="4CL"/>
    <property type="match status" value="1"/>
</dbReference>
<dbReference type="FunFam" id="3.30.300.30:FF:000007">
    <property type="entry name" value="4-coumarate--CoA ligase 2"/>
    <property type="match status" value="1"/>
</dbReference>
<dbReference type="FunFam" id="3.40.50.12780:FF:000003">
    <property type="entry name" value="Long-chain-fatty-acid--CoA ligase FadD"/>
    <property type="match status" value="1"/>
</dbReference>
<dbReference type="Gene3D" id="3.30.300.30">
    <property type="match status" value="1"/>
</dbReference>
<dbReference type="Gene3D" id="3.40.50.12780">
    <property type="entry name" value="N-terminal domain of ligase-like"/>
    <property type="match status" value="1"/>
</dbReference>
<dbReference type="InterPro" id="IPR025110">
    <property type="entry name" value="AMP-bd_C"/>
</dbReference>
<dbReference type="InterPro" id="IPR045851">
    <property type="entry name" value="AMP-bd_C_sf"/>
</dbReference>
<dbReference type="InterPro" id="IPR020845">
    <property type="entry name" value="AMP-binding_CS"/>
</dbReference>
<dbReference type="InterPro" id="IPR000873">
    <property type="entry name" value="AMP-dep_synth/lig_dom"/>
</dbReference>
<dbReference type="InterPro" id="IPR042099">
    <property type="entry name" value="ANL_N_sf"/>
</dbReference>
<dbReference type="PANTHER" id="PTHR24096:SF149">
    <property type="entry name" value="AMP-BINDING DOMAIN-CONTAINING PROTEIN-RELATED"/>
    <property type="match status" value="1"/>
</dbReference>
<dbReference type="PANTHER" id="PTHR24096">
    <property type="entry name" value="LONG-CHAIN-FATTY-ACID--COA LIGASE"/>
    <property type="match status" value="1"/>
</dbReference>
<dbReference type="Pfam" id="PF00501">
    <property type="entry name" value="AMP-binding"/>
    <property type="match status" value="1"/>
</dbReference>
<dbReference type="Pfam" id="PF13193">
    <property type="entry name" value="AMP-binding_C"/>
    <property type="match status" value="1"/>
</dbReference>
<dbReference type="SUPFAM" id="SSF56801">
    <property type="entry name" value="Acetyl-CoA synthetase-like"/>
    <property type="match status" value="1"/>
</dbReference>
<dbReference type="PROSITE" id="PS00455">
    <property type="entry name" value="AMP_BINDING"/>
    <property type="match status" value="1"/>
</dbReference>
<reference key="1">
    <citation type="journal article" date="2013" name="Mol. Plant">
        <title>Characterization of the formation of branched short-chain fatty acid:CoAs for bitter acid biosynthesis in hop glandular trichomes.</title>
        <authorList>
            <person name="Xu H."/>
            <person name="Zhang F."/>
            <person name="Liu B."/>
            <person name="Huhman D.V."/>
            <person name="Sumner L.W."/>
            <person name="Dixon R.A."/>
            <person name="Wang G."/>
        </authorList>
    </citation>
    <scope>NUCLEOTIDE SEQUENCE [MRNA]</scope>
    <scope>FUNCTION</scope>
    <scope>CATALYTIC ACTIVITY</scope>
    <scope>TISSUE SPECIFICITY</scope>
    <scope>DEVELOPMENTAL STAGE</scope>
    <scope>GENE FAMILY</scope>
    <scope>NOMENCLATURE</scope>
    <source>
        <strain>cv. Nugget</strain>
    </source>
</reference>
<reference key="2">
    <citation type="journal article" date="2018" name="Proc. Natl. Acad. Sci. U.S.A.">
        <title>Noncatalytic chalcone isomerase-fold proteins in Humulus lupulus are auxiliary components in prenylated flavonoid biosynthesis.</title>
        <authorList>
            <person name="Ban Z."/>
            <person name="Qin H."/>
            <person name="Mitchell A.J."/>
            <person name="Liu B."/>
            <person name="Zhang F."/>
            <person name="Weng J.-K."/>
            <person name="Dixon R.A."/>
            <person name="Wang G."/>
        </authorList>
    </citation>
    <scope>SUBCELLULAR LOCATION</scope>
</reference>
<reference key="3">
    <citation type="journal article" date="2019" name="Nat. Prod. Rep.">
        <title>Non-volatile natural products in plant glandular trichomes: chemistry, biological activities and biosynthesis.</title>
        <authorList>
            <person name="Liu Y."/>
            <person name="Jing S.-X."/>
            <person name="Luo S.-H."/>
            <person name="Li S.-H."/>
        </authorList>
    </citation>
    <scope>PATHWAY</scope>
    <scope>REVIEW</scope>
</reference>
<name>CCL1_HUMLU</name>
<proteinExistence type="evidence at protein level"/>
<protein>
    <recommendedName>
        <fullName evidence="5">4-coumarate--CoA ligase CCL1</fullName>
        <shortName evidence="5">HlCCL1</shortName>
        <ecNumber evidence="3">6.2.1.12</ecNumber>
    </recommendedName>
</protein>
<sequence length="548" mass="60011">MENNKQDDHQEEFIFRSKLPDIYIPNHLPLHSYCFENISQFKDRPCLINGATGEIITYADVDLTSRKVAAGLDKLGIKQGDVIMLLLQNSPEFVYAFLAASYIGAIITTANPFYTPAEVAKQAAASKTKLVITLAGYIDKVKEFTGGESGVKVMCVDAPPPESECLHFSELTQADETEIPAVKIHPDDVVALPYSSGTTGLPKGVMLTHKGLVTSVAQQVDGDNPNLYFHQNDVILCVLPLFHIYSLNSILLCGLRVGAAILIMQKFEISKLLELIEKFKVTIAPFVPPIVLSVAKCPDLHRYDLSSIRTVMSGGAPMGKELEDAVKEKLPHAKLGQGYGMTEAGPVLSMCLAFAKEPFPIKSGACGTVVRNAEMKIVDPDTGASLPRNQSGEICIRGKQIMKGYINDAEATKGTIDEGGWLHTGDIGFIDNDDELFIVDRLKELIKYKGFQVAPAELESMLISHPNITDAAVVPMKDEAAGEVPVAFVVRSNGSKITEEDIKQYISKQVVFYKRINKAFFIEEIPKNPSGKILRKILRAKLVTEQAI</sequence>
<evidence type="ECO:0000250" key="1">
    <source>
        <dbReference type="UniProtKB" id="Q42524"/>
    </source>
</evidence>
<evidence type="ECO:0000250" key="2">
    <source>
        <dbReference type="UniProtKB" id="Q81G39"/>
    </source>
</evidence>
<evidence type="ECO:0000269" key="3">
    <source>
    </source>
</evidence>
<evidence type="ECO:0000269" key="4">
    <source>
    </source>
</evidence>
<evidence type="ECO:0000303" key="5">
    <source>
    </source>
</evidence>
<evidence type="ECO:0000305" key="6"/>
<evidence type="ECO:0000305" key="7">
    <source>
    </source>
</evidence>
<comment type="function">
    <text evidence="3 7">Involved in the biosynthesis of prenylated phenolics natural products which contribute to the bitter taste of beer and display broad biological activities (Probable). Catalyzes the ligation of CoA on (E)-4-coumarate to produce (E)-4-coumaroyl-CoA (PubMed:23300257).</text>
</comment>
<comment type="catalytic activity">
    <reaction evidence="3">
        <text>(E)-4-coumarate + ATP + CoA = (E)-4-coumaroyl-CoA + AMP + diphosphate</text>
        <dbReference type="Rhea" id="RHEA:19641"/>
        <dbReference type="ChEBI" id="CHEBI:12876"/>
        <dbReference type="ChEBI" id="CHEBI:30616"/>
        <dbReference type="ChEBI" id="CHEBI:33019"/>
        <dbReference type="ChEBI" id="CHEBI:57287"/>
        <dbReference type="ChEBI" id="CHEBI:85008"/>
        <dbReference type="ChEBI" id="CHEBI:456215"/>
        <dbReference type="EC" id="6.2.1.12"/>
    </reaction>
    <physiologicalReaction direction="left-to-right" evidence="3">
        <dbReference type="Rhea" id="RHEA:19642"/>
    </physiologicalReaction>
</comment>
<comment type="pathway">
    <text evidence="7">Secondary metabolite biosynthesis.</text>
</comment>
<comment type="subcellular location">
    <subcellularLocation>
        <location evidence="4">Cytoplasm</location>
    </subcellularLocation>
</comment>
<comment type="tissue specificity">
    <text evidence="3">Mostly expressed in glandular trichomes (lupulin glands) after flowering, and, to a lower extent, in stems, leaves, cones and flowers.</text>
</comment>
<comment type="developmental stage">
    <text evidence="3">Accumulates progressively in glandular trichomes (lupulin glands) after flowering.</text>
</comment>
<comment type="domain">
    <text evidence="1">Both substrate-binding domains (SBD1 and SBD2) are involved in the substrate recognition, and are sufficient to confer the substrate specificity.</text>
</comment>
<comment type="similarity">
    <text evidence="6">Belongs to the ATP-dependent AMP-binding enzyme family.</text>
</comment>
<accession>M4ISH0</accession>
<feature type="chain" id="PRO_0000452946" description="4-coumarate--CoA ligase CCL1">
    <location>
        <begin position="1"/>
        <end position="548"/>
    </location>
</feature>
<feature type="region of interest" description="SBD1" evidence="1">
    <location>
        <begin position="268"/>
        <end position="337"/>
    </location>
</feature>
<feature type="region of interest" description="SBD2" evidence="1">
    <location>
        <begin position="338"/>
        <end position="405"/>
    </location>
</feature>
<feature type="binding site" evidence="2">
    <location>
        <begin position="195"/>
        <end position="203"/>
    </location>
    <ligand>
        <name>ATP</name>
        <dbReference type="ChEBI" id="CHEBI:30616"/>
    </ligand>
</feature>
<feature type="binding site" evidence="2">
    <location>
        <begin position="337"/>
        <end position="342"/>
    </location>
    <ligand>
        <name>ATP</name>
        <dbReference type="ChEBI" id="CHEBI:30616"/>
    </ligand>
</feature>
<feature type="binding site" evidence="2">
    <location>
        <position position="426"/>
    </location>
    <ligand>
        <name>ATP</name>
        <dbReference type="ChEBI" id="CHEBI:30616"/>
    </ligand>
</feature>
<feature type="binding site" evidence="2">
    <location>
        <begin position="438"/>
        <end position="441"/>
    </location>
    <ligand>
        <name>ATP</name>
        <dbReference type="ChEBI" id="CHEBI:30616"/>
    </ligand>
</feature>
<feature type="binding site" evidence="2">
    <location>
        <position position="532"/>
    </location>
    <ligand>
        <name>ATP</name>
        <dbReference type="ChEBI" id="CHEBI:30616"/>
    </ligand>
</feature>
<keyword id="KW-0067">ATP-binding</keyword>
<keyword id="KW-0963">Cytoplasm</keyword>
<keyword id="KW-0436">Ligase</keyword>
<keyword id="KW-0547">Nucleotide-binding</keyword>